<gene>
    <name type="primary">rpl27</name>
</gene>
<organism>
    <name type="scientific">Calyptrosphaera sphaeroidea</name>
    <dbReference type="NCBI Taxonomy" id="35139"/>
    <lineage>
        <taxon>Eukaryota</taxon>
        <taxon>Haptista</taxon>
        <taxon>Haptophyta</taxon>
        <taxon>Prymnesiophyceae</taxon>
        <taxon>Coccosphaerales</taxon>
        <taxon>Calyptrosphaeraceae</taxon>
        <taxon>Calyptrosphaera</taxon>
    </lineage>
</organism>
<protein>
    <recommendedName>
        <fullName evidence="1">Large ribosomal subunit protein bL27c</fullName>
    </recommendedName>
    <alternativeName>
        <fullName>50S ribosomal protein L27, chloroplastic</fullName>
    </alternativeName>
</protein>
<accession>P41548</accession>
<reference key="1">
    <citation type="journal article" date="1994" name="Plant Mol. Biol.">
        <title>The gene for ribosomal protein L27 is located on the plastid rather than the nuclear genome of the chlorophyll c-containing alga Pleurochrysis carterae.</title>
        <authorList>
            <person name="Fujiwara S."/>
            <person name="Kawachi M."/>
            <person name="Inouye I."/>
            <person name="Someya J."/>
        </authorList>
    </citation>
    <scope>NUCLEOTIDE SEQUENCE [GENOMIC DNA]</scope>
</reference>
<feature type="chain" id="PRO_0000181216" description="Large ribosomal subunit protein bL27c">
    <location>
        <begin position="1" status="less than"/>
        <end position="74"/>
    </location>
</feature>
<feature type="non-terminal residue">
    <location>
        <position position="1"/>
    </location>
</feature>
<evidence type="ECO:0000305" key="1"/>
<proteinExistence type="inferred from homology"/>
<sequence length="74" mass="8054">STKNGRDSNSKRLGVKVYGNQPVKAGGIMIRQRGLTFKPGISVSVGKDYTLFATQNGYVQFETINDKKFVSVVG</sequence>
<geneLocation type="chloroplast"/>
<comment type="subcellular location">
    <subcellularLocation>
        <location>Plastid</location>
        <location>Chloroplast</location>
    </subcellularLocation>
</comment>
<comment type="similarity">
    <text evidence="1">Belongs to the bacterial ribosomal protein bL27 family.</text>
</comment>
<dbReference type="EMBL" id="D26097">
    <property type="protein sequence ID" value="BAA05093.1"/>
    <property type="molecule type" value="Genomic_DNA"/>
</dbReference>
<dbReference type="SMR" id="P41548"/>
<dbReference type="GO" id="GO:0009507">
    <property type="term" value="C:chloroplast"/>
    <property type="evidence" value="ECO:0007669"/>
    <property type="project" value="UniProtKB-SubCell"/>
</dbReference>
<dbReference type="GO" id="GO:0022625">
    <property type="term" value="C:cytosolic large ribosomal subunit"/>
    <property type="evidence" value="ECO:0007669"/>
    <property type="project" value="TreeGrafter"/>
</dbReference>
<dbReference type="GO" id="GO:0003735">
    <property type="term" value="F:structural constituent of ribosome"/>
    <property type="evidence" value="ECO:0007669"/>
    <property type="project" value="InterPro"/>
</dbReference>
<dbReference type="GO" id="GO:0006412">
    <property type="term" value="P:translation"/>
    <property type="evidence" value="ECO:0007669"/>
    <property type="project" value="InterPro"/>
</dbReference>
<dbReference type="FunFam" id="2.40.50.100:FF:000020">
    <property type="entry name" value="50S ribosomal protein L27"/>
    <property type="match status" value="1"/>
</dbReference>
<dbReference type="Gene3D" id="2.40.50.100">
    <property type="match status" value="1"/>
</dbReference>
<dbReference type="InterPro" id="IPR001684">
    <property type="entry name" value="Ribosomal_bL27"/>
</dbReference>
<dbReference type="InterPro" id="IPR018261">
    <property type="entry name" value="Ribosomal_bL27_CS"/>
</dbReference>
<dbReference type="PANTHER" id="PTHR15893:SF0">
    <property type="entry name" value="LARGE RIBOSOMAL SUBUNIT PROTEIN BL27M"/>
    <property type="match status" value="1"/>
</dbReference>
<dbReference type="PANTHER" id="PTHR15893">
    <property type="entry name" value="RIBOSOMAL PROTEIN L27"/>
    <property type="match status" value="1"/>
</dbReference>
<dbReference type="Pfam" id="PF01016">
    <property type="entry name" value="Ribosomal_L27"/>
    <property type="match status" value="1"/>
</dbReference>
<dbReference type="PRINTS" id="PR00063">
    <property type="entry name" value="RIBOSOMALL27"/>
</dbReference>
<dbReference type="SUPFAM" id="SSF110324">
    <property type="entry name" value="Ribosomal L27 protein-like"/>
    <property type="match status" value="1"/>
</dbReference>
<dbReference type="PROSITE" id="PS00831">
    <property type="entry name" value="RIBOSOMAL_L27"/>
    <property type="match status" value="1"/>
</dbReference>
<name>RK27_CALSH</name>
<keyword id="KW-0150">Chloroplast</keyword>
<keyword id="KW-0934">Plastid</keyword>
<keyword id="KW-0687">Ribonucleoprotein</keyword>
<keyword id="KW-0689">Ribosomal protein</keyword>